<sequence length="249" mass="26654">MRILISNDDGVNAPGIAALHQALADYAECVVIAPAEDRSGASSALTLDRPLHPMALSNGYISLNGTPTDCVHLGLNGLLEQTPDMVVSGINLGANLGDDVLYSGTVAAALEGRFLARPAFAFSLLSRLPDNLPTAAYFARKLVEAHERLELPPRTVLNVNVPNLPLEHIRGVQLTRLGHRARAAAPVKVVNPRGKEGYWIAAAGDVEDGSQGTDFHAVMQGYVSITPLRLDRTFNEALETMDGWLEGIF</sequence>
<reference key="1">
    <citation type="submission" date="2007-04" db="EMBL/GenBank/DDBJ databases">
        <title>Complete sequence of Pseudomonas mendocina ymp.</title>
        <authorList>
            <consortium name="US DOE Joint Genome Institute"/>
            <person name="Copeland A."/>
            <person name="Lucas S."/>
            <person name="Lapidus A."/>
            <person name="Barry K."/>
            <person name="Glavina del Rio T."/>
            <person name="Dalin E."/>
            <person name="Tice H."/>
            <person name="Pitluck S."/>
            <person name="Kiss H."/>
            <person name="Brettin T."/>
            <person name="Detter J.C."/>
            <person name="Bruce D."/>
            <person name="Han C."/>
            <person name="Schmutz J."/>
            <person name="Larimer F."/>
            <person name="Land M."/>
            <person name="Hauser L."/>
            <person name="Kyrpides N."/>
            <person name="Mikhailova N."/>
            <person name="Hersman L."/>
            <person name="Dubois J."/>
            <person name="Maurice P."/>
            <person name="Richardson P."/>
        </authorList>
    </citation>
    <scope>NUCLEOTIDE SEQUENCE [LARGE SCALE GENOMIC DNA]</scope>
    <source>
        <strain>ymp</strain>
    </source>
</reference>
<evidence type="ECO:0000255" key="1">
    <source>
        <dbReference type="HAMAP-Rule" id="MF_00060"/>
    </source>
</evidence>
<feature type="chain" id="PRO_1000007770" description="5'-nucleotidase SurE">
    <location>
        <begin position="1"/>
        <end position="249"/>
    </location>
</feature>
<feature type="binding site" evidence="1">
    <location>
        <position position="8"/>
    </location>
    <ligand>
        <name>a divalent metal cation</name>
        <dbReference type="ChEBI" id="CHEBI:60240"/>
    </ligand>
</feature>
<feature type="binding site" evidence="1">
    <location>
        <position position="9"/>
    </location>
    <ligand>
        <name>a divalent metal cation</name>
        <dbReference type="ChEBI" id="CHEBI:60240"/>
    </ligand>
</feature>
<feature type="binding site" evidence="1">
    <location>
        <position position="39"/>
    </location>
    <ligand>
        <name>a divalent metal cation</name>
        <dbReference type="ChEBI" id="CHEBI:60240"/>
    </ligand>
</feature>
<feature type="binding site" evidence="1">
    <location>
        <position position="91"/>
    </location>
    <ligand>
        <name>a divalent metal cation</name>
        <dbReference type="ChEBI" id="CHEBI:60240"/>
    </ligand>
</feature>
<comment type="function">
    <text evidence="1">Nucleotidase that shows phosphatase activity on nucleoside 5'-monophosphates.</text>
</comment>
<comment type="catalytic activity">
    <reaction evidence="1">
        <text>a ribonucleoside 5'-phosphate + H2O = a ribonucleoside + phosphate</text>
        <dbReference type="Rhea" id="RHEA:12484"/>
        <dbReference type="ChEBI" id="CHEBI:15377"/>
        <dbReference type="ChEBI" id="CHEBI:18254"/>
        <dbReference type="ChEBI" id="CHEBI:43474"/>
        <dbReference type="ChEBI" id="CHEBI:58043"/>
        <dbReference type="EC" id="3.1.3.5"/>
    </reaction>
</comment>
<comment type="cofactor">
    <cofactor evidence="1">
        <name>a divalent metal cation</name>
        <dbReference type="ChEBI" id="CHEBI:60240"/>
    </cofactor>
    <text evidence="1">Binds 1 divalent metal cation per subunit.</text>
</comment>
<comment type="subcellular location">
    <subcellularLocation>
        <location evidence="1">Cytoplasm</location>
    </subcellularLocation>
</comment>
<comment type="similarity">
    <text evidence="1">Belongs to the SurE nucleotidase family.</text>
</comment>
<protein>
    <recommendedName>
        <fullName evidence="1">5'-nucleotidase SurE</fullName>
        <ecNumber evidence="1">3.1.3.5</ecNumber>
    </recommendedName>
    <alternativeName>
        <fullName evidence="1">Nucleoside 5'-monophosphate phosphohydrolase</fullName>
    </alternativeName>
</protein>
<gene>
    <name evidence="1" type="primary">surE</name>
    <name type="ordered locus">Pmen_3024</name>
</gene>
<dbReference type="EC" id="3.1.3.5" evidence="1"/>
<dbReference type="EMBL" id="CP000680">
    <property type="protein sequence ID" value="ABP85778.1"/>
    <property type="molecule type" value="Genomic_DNA"/>
</dbReference>
<dbReference type="SMR" id="A4XWR2"/>
<dbReference type="STRING" id="399739.Pmen_3024"/>
<dbReference type="KEGG" id="pmy:Pmen_3024"/>
<dbReference type="PATRIC" id="fig|399739.8.peg.3070"/>
<dbReference type="eggNOG" id="COG0496">
    <property type="taxonomic scope" value="Bacteria"/>
</dbReference>
<dbReference type="HOGENOM" id="CLU_045192_1_2_6"/>
<dbReference type="OrthoDB" id="9780815at2"/>
<dbReference type="GO" id="GO:0005737">
    <property type="term" value="C:cytoplasm"/>
    <property type="evidence" value="ECO:0007669"/>
    <property type="project" value="UniProtKB-SubCell"/>
</dbReference>
<dbReference type="GO" id="GO:0008254">
    <property type="term" value="F:3'-nucleotidase activity"/>
    <property type="evidence" value="ECO:0007669"/>
    <property type="project" value="TreeGrafter"/>
</dbReference>
<dbReference type="GO" id="GO:0008253">
    <property type="term" value="F:5'-nucleotidase activity"/>
    <property type="evidence" value="ECO:0007669"/>
    <property type="project" value="UniProtKB-UniRule"/>
</dbReference>
<dbReference type="GO" id="GO:0004309">
    <property type="term" value="F:exopolyphosphatase activity"/>
    <property type="evidence" value="ECO:0007669"/>
    <property type="project" value="TreeGrafter"/>
</dbReference>
<dbReference type="GO" id="GO:0046872">
    <property type="term" value="F:metal ion binding"/>
    <property type="evidence" value="ECO:0007669"/>
    <property type="project" value="UniProtKB-UniRule"/>
</dbReference>
<dbReference type="GO" id="GO:0000166">
    <property type="term" value="F:nucleotide binding"/>
    <property type="evidence" value="ECO:0007669"/>
    <property type="project" value="UniProtKB-KW"/>
</dbReference>
<dbReference type="FunFam" id="3.40.1210.10:FF:000001">
    <property type="entry name" value="5'/3'-nucleotidase SurE"/>
    <property type="match status" value="1"/>
</dbReference>
<dbReference type="Gene3D" id="3.40.1210.10">
    <property type="entry name" value="Survival protein SurE-like phosphatase/nucleotidase"/>
    <property type="match status" value="1"/>
</dbReference>
<dbReference type="HAMAP" id="MF_00060">
    <property type="entry name" value="SurE"/>
    <property type="match status" value="1"/>
</dbReference>
<dbReference type="InterPro" id="IPR030048">
    <property type="entry name" value="SurE"/>
</dbReference>
<dbReference type="InterPro" id="IPR002828">
    <property type="entry name" value="SurE-like_Pase/nucleotidase"/>
</dbReference>
<dbReference type="InterPro" id="IPR036523">
    <property type="entry name" value="SurE-like_sf"/>
</dbReference>
<dbReference type="NCBIfam" id="NF001489">
    <property type="entry name" value="PRK00346.1-3"/>
    <property type="match status" value="1"/>
</dbReference>
<dbReference type="NCBIfam" id="NF001490">
    <property type="entry name" value="PRK00346.1-4"/>
    <property type="match status" value="1"/>
</dbReference>
<dbReference type="NCBIfam" id="TIGR00087">
    <property type="entry name" value="surE"/>
    <property type="match status" value="1"/>
</dbReference>
<dbReference type="PANTHER" id="PTHR30457">
    <property type="entry name" value="5'-NUCLEOTIDASE SURE"/>
    <property type="match status" value="1"/>
</dbReference>
<dbReference type="PANTHER" id="PTHR30457:SF12">
    <property type="entry name" value="5'_3'-NUCLEOTIDASE SURE"/>
    <property type="match status" value="1"/>
</dbReference>
<dbReference type="Pfam" id="PF01975">
    <property type="entry name" value="SurE"/>
    <property type="match status" value="1"/>
</dbReference>
<dbReference type="SUPFAM" id="SSF64167">
    <property type="entry name" value="SurE-like"/>
    <property type="match status" value="1"/>
</dbReference>
<accession>A4XWR2</accession>
<name>SURE_ECTM1</name>
<organism>
    <name type="scientific">Ectopseudomonas mendocina (strain ymp)</name>
    <name type="common">Pseudomonas mendocina</name>
    <dbReference type="NCBI Taxonomy" id="399739"/>
    <lineage>
        <taxon>Bacteria</taxon>
        <taxon>Pseudomonadati</taxon>
        <taxon>Pseudomonadota</taxon>
        <taxon>Gammaproteobacteria</taxon>
        <taxon>Pseudomonadales</taxon>
        <taxon>Pseudomonadaceae</taxon>
        <taxon>Ectopseudomonas</taxon>
    </lineage>
</organism>
<proteinExistence type="inferred from homology"/>
<keyword id="KW-0963">Cytoplasm</keyword>
<keyword id="KW-0378">Hydrolase</keyword>
<keyword id="KW-0479">Metal-binding</keyword>
<keyword id="KW-0547">Nucleotide-binding</keyword>